<protein>
    <recommendedName>
        <fullName evidence="1">Ribosomal RNA large subunit methyltransferase H</fullName>
        <ecNumber evidence="1">2.1.1.177</ecNumber>
    </recommendedName>
    <alternativeName>
        <fullName evidence="1">23S rRNA (pseudouridine1915-N3)-methyltransferase</fullName>
    </alternativeName>
    <alternativeName>
        <fullName evidence="1">23S rRNA m3Psi1915 methyltransferase</fullName>
    </alternativeName>
    <alternativeName>
        <fullName evidence="1">rRNA (pseudouridine-N3-)-methyltransferase RlmH</fullName>
    </alternativeName>
</protein>
<dbReference type="EC" id="2.1.1.177" evidence="1"/>
<dbReference type="EMBL" id="CP000927">
    <property type="protein sequence ID" value="ABZ73842.1"/>
    <property type="molecule type" value="Genomic_DNA"/>
</dbReference>
<dbReference type="SMR" id="B0T320"/>
<dbReference type="STRING" id="366602.Caul_4722"/>
<dbReference type="KEGG" id="cak:Caul_4722"/>
<dbReference type="eggNOG" id="COG1576">
    <property type="taxonomic scope" value="Bacteria"/>
</dbReference>
<dbReference type="HOGENOM" id="CLU_100552_1_1_5"/>
<dbReference type="OrthoDB" id="9806643at2"/>
<dbReference type="GO" id="GO:0005737">
    <property type="term" value="C:cytoplasm"/>
    <property type="evidence" value="ECO:0007669"/>
    <property type="project" value="UniProtKB-SubCell"/>
</dbReference>
<dbReference type="GO" id="GO:0070038">
    <property type="term" value="F:rRNA (pseudouridine-N3-)-methyltransferase activity"/>
    <property type="evidence" value="ECO:0007669"/>
    <property type="project" value="UniProtKB-UniRule"/>
</dbReference>
<dbReference type="CDD" id="cd18081">
    <property type="entry name" value="RlmH-like"/>
    <property type="match status" value="1"/>
</dbReference>
<dbReference type="Gene3D" id="3.40.1280.10">
    <property type="match status" value="1"/>
</dbReference>
<dbReference type="HAMAP" id="MF_00658">
    <property type="entry name" value="23SrRNA_methyltr_H"/>
    <property type="match status" value="1"/>
</dbReference>
<dbReference type="InterPro" id="IPR029028">
    <property type="entry name" value="Alpha/beta_knot_MTases"/>
</dbReference>
<dbReference type="InterPro" id="IPR003742">
    <property type="entry name" value="RlmH-like"/>
</dbReference>
<dbReference type="InterPro" id="IPR029026">
    <property type="entry name" value="tRNA_m1G_MTases_N"/>
</dbReference>
<dbReference type="NCBIfam" id="NF000988">
    <property type="entry name" value="PRK00103.2-2"/>
    <property type="match status" value="1"/>
</dbReference>
<dbReference type="PANTHER" id="PTHR33603">
    <property type="entry name" value="METHYLTRANSFERASE"/>
    <property type="match status" value="1"/>
</dbReference>
<dbReference type="PANTHER" id="PTHR33603:SF1">
    <property type="entry name" value="RIBOSOMAL RNA LARGE SUBUNIT METHYLTRANSFERASE H"/>
    <property type="match status" value="1"/>
</dbReference>
<dbReference type="Pfam" id="PF02590">
    <property type="entry name" value="SPOUT_MTase"/>
    <property type="match status" value="1"/>
</dbReference>
<dbReference type="PIRSF" id="PIRSF004505">
    <property type="entry name" value="MT_bac"/>
    <property type="match status" value="1"/>
</dbReference>
<dbReference type="SUPFAM" id="SSF75217">
    <property type="entry name" value="alpha/beta knot"/>
    <property type="match status" value="1"/>
</dbReference>
<evidence type="ECO:0000255" key="1">
    <source>
        <dbReference type="HAMAP-Rule" id="MF_00658"/>
    </source>
</evidence>
<reference key="1">
    <citation type="submission" date="2008-01" db="EMBL/GenBank/DDBJ databases">
        <title>Complete sequence of chromosome of Caulobacter sp. K31.</title>
        <authorList>
            <consortium name="US DOE Joint Genome Institute"/>
            <person name="Copeland A."/>
            <person name="Lucas S."/>
            <person name="Lapidus A."/>
            <person name="Barry K."/>
            <person name="Glavina del Rio T."/>
            <person name="Dalin E."/>
            <person name="Tice H."/>
            <person name="Pitluck S."/>
            <person name="Bruce D."/>
            <person name="Goodwin L."/>
            <person name="Thompson L.S."/>
            <person name="Brettin T."/>
            <person name="Detter J.C."/>
            <person name="Han C."/>
            <person name="Schmutz J."/>
            <person name="Larimer F."/>
            <person name="Land M."/>
            <person name="Hauser L."/>
            <person name="Kyrpides N."/>
            <person name="Kim E."/>
            <person name="Stephens C."/>
            <person name="Richardson P."/>
        </authorList>
    </citation>
    <scope>NUCLEOTIDE SEQUENCE [LARGE SCALE GENOMIC DNA]</scope>
    <source>
        <strain>K31</strain>
    </source>
</reference>
<sequence length="154" mass="16559">MKITLLTVGKLGRMVEAQLAVDYASRATASGRALAVGPVEIVEVEARKPGKAAEAEVLRPHLEGAYVIACDEHGKVRPSRAFAEHVGRLRDDGHRRLVFLIGGADGLDPSILSTANETLAFGPQTWPHALARAMLAEQVYRAVTILAGSPYHRD</sequence>
<accession>B0T320</accession>
<gene>
    <name evidence="1" type="primary">rlmH</name>
    <name type="ordered locus">Caul_4722</name>
</gene>
<name>RLMH_CAUSK</name>
<proteinExistence type="inferred from homology"/>
<feature type="chain" id="PRO_1000082796" description="Ribosomal RNA large subunit methyltransferase H">
    <location>
        <begin position="1"/>
        <end position="154"/>
    </location>
</feature>
<feature type="binding site" evidence="1">
    <location>
        <position position="102"/>
    </location>
    <ligand>
        <name>S-adenosyl-L-methionine</name>
        <dbReference type="ChEBI" id="CHEBI:59789"/>
    </ligand>
</feature>
<comment type="function">
    <text evidence="1">Specifically methylates the pseudouridine at position 1915 (m3Psi1915) in 23S rRNA.</text>
</comment>
<comment type="catalytic activity">
    <reaction evidence="1">
        <text>pseudouridine(1915) in 23S rRNA + S-adenosyl-L-methionine = N(3)-methylpseudouridine(1915) in 23S rRNA + S-adenosyl-L-homocysteine + H(+)</text>
        <dbReference type="Rhea" id="RHEA:42752"/>
        <dbReference type="Rhea" id="RHEA-COMP:10221"/>
        <dbReference type="Rhea" id="RHEA-COMP:10222"/>
        <dbReference type="ChEBI" id="CHEBI:15378"/>
        <dbReference type="ChEBI" id="CHEBI:57856"/>
        <dbReference type="ChEBI" id="CHEBI:59789"/>
        <dbReference type="ChEBI" id="CHEBI:65314"/>
        <dbReference type="ChEBI" id="CHEBI:74486"/>
        <dbReference type="EC" id="2.1.1.177"/>
    </reaction>
</comment>
<comment type="subunit">
    <text evidence="1">Homodimer.</text>
</comment>
<comment type="subcellular location">
    <subcellularLocation>
        <location evidence="1">Cytoplasm</location>
    </subcellularLocation>
</comment>
<comment type="similarity">
    <text evidence="1">Belongs to the RNA methyltransferase RlmH family.</text>
</comment>
<keyword id="KW-0963">Cytoplasm</keyword>
<keyword id="KW-0489">Methyltransferase</keyword>
<keyword id="KW-0698">rRNA processing</keyword>
<keyword id="KW-0949">S-adenosyl-L-methionine</keyword>
<keyword id="KW-0808">Transferase</keyword>
<organism>
    <name type="scientific">Caulobacter sp. (strain K31)</name>
    <dbReference type="NCBI Taxonomy" id="366602"/>
    <lineage>
        <taxon>Bacteria</taxon>
        <taxon>Pseudomonadati</taxon>
        <taxon>Pseudomonadota</taxon>
        <taxon>Alphaproteobacteria</taxon>
        <taxon>Caulobacterales</taxon>
        <taxon>Caulobacteraceae</taxon>
        <taxon>Caulobacter</taxon>
    </lineage>
</organism>